<accession>P0CB85</accession>
<accession>Q0MQE5</accession>
<accession>Q5NVJ1</accession>
<accession>Q5R4A8</accession>
<proteinExistence type="evidence at transcript level"/>
<protein>
    <recommendedName>
        <fullName>NADH dehydrogenase [ubiquinone] 1 beta subcomplex subunit 8, mitochondrial</fullName>
    </recommendedName>
    <alternativeName>
        <fullName>Complex I-ASHI</fullName>
        <shortName>CI-ASHI</shortName>
    </alternativeName>
    <alternativeName>
        <fullName>NADH-ubiquinone oxidoreductase ASHI subunit</fullName>
    </alternativeName>
</protein>
<sequence>MAVARAGVLGVQWLQRASWNVMPLGARTASHMTKDMFPGPYPRTPEERAAAAKKYNMRVEDYEPYPDDGMGYGDYPKLPDRSQHERDPWYSWDQPDLRLNWGEPMHWHLDMFNRNRVDTSPILVSWNVMCMQLFGFLAFMIFMCWVGEVYPVYQPVGPKQYPYNNLYLERGGDPSKEPERVVHYEI</sequence>
<gene>
    <name type="primary">NDUFB8</name>
</gene>
<comment type="function">
    <text evidence="2">Accessory subunit of the mitochondrial membrane respiratory chain NADH dehydrogenase (Complex I), that is believed not to be involved in catalysis. Complex I functions in the transfer of electrons from NADH to the respiratory chain. The immediate electron acceptor for the enzyme is believed to be ubiquinone.</text>
</comment>
<comment type="subunit">
    <text evidence="2">Complex I is composed of 45 different subunits.</text>
</comment>
<comment type="subcellular location">
    <subcellularLocation>
        <location evidence="2">Mitochondrion inner membrane</location>
        <topology evidence="3">Single-pass membrane protein</topology>
        <orientation evidence="2">Matrix side</orientation>
    </subcellularLocation>
</comment>
<comment type="similarity">
    <text evidence="4">Belongs to the complex I NDUFB8 subunit family.</text>
</comment>
<organism>
    <name type="scientific">Pongo abelii</name>
    <name type="common">Sumatran orangutan</name>
    <name type="synonym">Pongo pygmaeus abelii</name>
    <dbReference type="NCBI Taxonomy" id="9601"/>
    <lineage>
        <taxon>Eukaryota</taxon>
        <taxon>Metazoa</taxon>
        <taxon>Chordata</taxon>
        <taxon>Craniata</taxon>
        <taxon>Vertebrata</taxon>
        <taxon>Euteleostomi</taxon>
        <taxon>Mammalia</taxon>
        <taxon>Eutheria</taxon>
        <taxon>Euarchontoglires</taxon>
        <taxon>Primates</taxon>
        <taxon>Haplorrhini</taxon>
        <taxon>Catarrhini</taxon>
        <taxon>Hominidae</taxon>
        <taxon>Pongo</taxon>
    </lineage>
</organism>
<name>NDUB8_PONAB</name>
<dbReference type="EMBL" id="CR861347">
    <property type="protein sequence ID" value="CAH93408.1"/>
    <property type="molecule type" value="mRNA"/>
</dbReference>
<dbReference type="EMBL" id="CR926037">
    <property type="protein sequence ID" value="CAI29672.1"/>
    <property type="molecule type" value="mRNA"/>
</dbReference>
<dbReference type="RefSeq" id="NP_001127101.1">
    <property type="nucleotide sequence ID" value="NM_001133629.1"/>
</dbReference>
<dbReference type="SMR" id="P0CB85"/>
<dbReference type="FunCoup" id="P0CB85">
    <property type="interactions" value="1319"/>
</dbReference>
<dbReference type="STRING" id="9601.ENSPPYP00000002983"/>
<dbReference type="GeneID" id="100174138"/>
<dbReference type="KEGG" id="pon:100174138"/>
<dbReference type="CTD" id="4714"/>
<dbReference type="eggNOG" id="KOG4040">
    <property type="taxonomic scope" value="Eukaryota"/>
</dbReference>
<dbReference type="InParanoid" id="P0CB85"/>
<dbReference type="OrthoDB" id="2014058at2759"/>
<dbReference type="Proteomes" id="UP000001595">
    <property type="component" value="Unplaced"/>
</dbReference>
<dbReference type="GO" id="GO:0005743">
    <property type="term" value="C:mitochondrial inner membrane"/>
    <property type="evidence" value="ECO:0007669"/>
    <property type="project" value="UniProtKB-SubCell"/>
</dbReference>
<dbReference type="GO" id="GO:0045271">
    <property type="term" value="C:respiratory chain complex I"/>
    <property type="evidence" value="ECO:0000250"/>
    <property type="project" value="UniProtKB"/>
</dbReference>
<dbReference type="GO" id="GO:0006120">
    <property type="term" value="P:mitochondrial electron transport, NADH to ubiquinone"/>
    <property type="evidence" value="ECO:0007669"/>
    <property type="project" value="InterPro"/>
</dbReference>
<dbReference type="InterPro" id="IPR008699">
    <property type="entry name" value="NDUFB8"/>
</dbReference>
<dbReference type="InterPro" id="IPR016551">
    <property type="entry name" value="Ndufb8_metazoa"/>
</dbReference>
<dbReference type="PANTHER" id="PTHR12840:SF2">
    <property type="entry name" value="NADH DEHYDROGENASE [UBIQUINONE] 1 BETA SUBCOMPLEX SUBUNIT 8, MITOCHONDRIAL"/>
    <property type="match status" value="1"/>
</dbReference>
<dbReference type="PANTHER" id="PTHR12840">
    <property type="entry name" value="NADH-UBIQUINONE OXIDOREDUCTASE ASHI SUBUNIT"/>
    <property type="match status" value="1"/>
</dbReference>
<dbReference type="Pfam" id="PF05821">
    <property type="entry name" value="NDUF_B8"/>
    <property type="match status" value="1"/>
</dbReference>
<dbReference type="PIRSF" id="PIRSF009288">
    <property type="entry name" value="NDUB8"/>
    <property type="match status" value="1"/>
</dbReference>
<feature type="transit peptide" description="Mitochondrion" evidence="1">
    <location>
        <begin position="1"/>
        <end position="28"/>
    </location>
</feature>
<feature type="chain" id="PRO_0000233982" description="NADH dehydrogenase [ubiquinone] 1 beta subcomplex subunit 8, mitochondrial">
    <location>
        <begin position="29"/>
        <end position="186"/>
    </location>
</feature>
<feature type="transmembrane region" description="Helical" evidence="3">
    <location>
        <begin position="133"/>
        <end position="153"/>
    </location>
</feature>
<feature type="sequence conflict" description="In Ref. 1; CAI29672." evidence="4" ref="1">
    <original>H</original>
    <variation>R</variation>
    <location>
        <position position="183"/>
    </location>
</feature>
<evidence type="ECO:0000250" key="1"/>
<evidence type="ECO:0000250" key="2">
    <source>
        <dbReference type="UniProtKB" id="O95169"/>
    </source>
</evidence>
<evidence type="ECO:0000255" key="3"/>
<evidence type="ECO:0000305" key="4"/>
<keyword id="KW-0249">Electron transport</keyword>
<keyword id="KW-0472">Membrane</keyword>
<keyword id="KW-0496">Mitochondrion</keyword>
<keyword id="KW-0999">Mitochondrion inner membrane</keyword>
<keyword id="KW-1185">Reference proteome</keyword>
<keyword id="KW-0679">Respiratory chain</keyword>
<keyword id="KW-0809">Transit peptide</keyword>
<keyword id="KW-0812">Transmembrane</keyword>
<keyword id="KW-1133">Transmembrane helix</keyword>
<keyword id="KW-0813">Transport</keyword>
<reference key="1">
    <citation type="submission" date="2004-11" db="EMBL/GenBank/DDBJ databases">
        <authorList>
            <consortium name="The German cDNA consortium"/>
        </authorList>
    </citation>
    <scope>NUCLEOTIDE SEQUENCE [LARGE SCALE MRNA]</scope>
    <source>
        <tissue>Brain cortex</tissue>
    </source>
</reference>